<comment type="function">
    <text evidence="1">Functions as a cell adhesion molecule through homophilic interaction. Stimulates cell growth (By similarity).</text>
</comment>
<comment type="subcellular location">
    <subcellularLocation>
        <location evidence="1">Cell membrane</location>
        <topology evidence="1">Single-pass type I membrane protein</topology>
    </subcellularLocation>
</comment>
<comment type="PTM">
    <text evidence="1">N-glycosylated.</text>
</comment>
<sequence>MTRRRSALASWLLLSLLGVAASLEVSESPGSVQVARGQTAVLPCAFSTSAALLNLNVIWMVIPLSNANQPEQVILYQGGQMFDGALRFHGRVGFTGTMPATNVSIFINNTQLSDTGTYQCLVNNLPDRGGRNIGVTGLTVLVPPSAPNCQIQGSQDIGSDVILLCSSEEGIPRPTYLWEKLDNTLKLPPTATQDQVQGTVTIRNISALSSGLYQCVASNAIGTSTCLLDLQVISPQPRSVGVIAGAVGTGAVLIVICLALTSGAFFYWRSKNKEEEEEEIPNEIREDDLPPKCSSAKAFHTEISSSENNTLTSSNTYNSRYWNNNPKPHKNTESFNHFSDLRQSFSGNAVIPSIYANGNHLVLGPHKTLVVTANRGSSPQVMPRNNGSVSRKPWSQHTHSYTVSQMTLERIGAVPVMVPAQSRAGSLV</sequence>
<evidence type="ECO:0000250" key="1"/>
<evidence type="ECO:0000250" key="2">
    <source>
        <dbReference type="UniProtKB" id="P0C673"/>
    </source>
</evidence>
<evidence type="ECO:0000255" key="3"/>
<evidence type="ECO:0000255" key="4">
    <source>
        <dbReference type="PROSITE-ProRule" id="PRU00114"/>
    </source>
</evidence>
<protein>
    <recommendedName>
        <fullName>Immunoglobulin superfamily member 11</fullName>
        <shortName>IgSF11</shortName>
    </recommendedName>
</protein>
<feature type="signal peptide" evidence="3">
    <location>
        <begin position="1"/>
        <end position="22"/>
    </location>
</feature>
<feature type="chain" id="PRO_0000317372" description="Immunoglobulin superfamily member 11">
    <location>
        <begin position="23"/>
        <end position="428"/>
    </location>
</feature>
<feature type="topological domain" description="Extracellular" evidence="3">
    <location>
        <begin position="23"/>
        <end position="239"/>
    </location>
</feature>
<feature type="transmembrane region" description="Helical" evidence="3">
    <location>
        <begin position="240"/>
        <end position="260"/>
    </location>
</feature>
<feature type="topological domain" description="Cytoplasmic" evidence="3">
    <location>
        <begin position="261"/>
        <end position="428"/>
    </location>
</feature>
<feature type="domain" description="Ig-like V-type">
    <location>
        <begin position="23"/>
        <end position="136"/>
    </location>
</feature>
<feature type="domain" description="Ig-like C2-type">
    <location>
        <begin position="144"/>
        <end position="234"/>
    </location>
</feature>
<feature type="modified residue" description="Omega-N-methylarginine" evidence="2">
    <location>
        <position position="375"/>
    </location>
</feature>
<feature type="glycosylation site" description="N-linked (GlcNAc...) asparagine" evidence="3">
    <location>
        <position position="102"/>
    </location>
</feature>
<feature type="disulfide bond" evidence="4">
    <location>
        <begin position="44"/>
        <end position="120"/>
    </location>
</feature>
<feature type="disulfide bond" evidence="4">
    <location>
        <begin position="165"/>
        <end position="215"/>
    </location>
</feature>
<dbReference type="EMBL" id="BC085929">
    <property type="protein sequence ID" value="AAH85929.1"/>
    <property type="molecule type" value="mRNA"/>
</dbReference>
<dbReference type="RefSeq" id="NP_001013138.1">
    <property type="nucleotide sequence ID" value="NM_001013120.1"/>
</dbReference>
<dbReference type="SMR" id="Q5U2P2"/>
<dbReference type="FunCoup" id="Q5U2P2">
    <property type="interactions" value="945"/>
</dbReference>
<dbReference type="STRING" id="10116.ENSRNOP00000059779"/>
<dbReference type="GlyCosmos" id="Q5U2P2">
    <property type="glycosylation" value="1 site, No reported glycans"/>
</dbReference>
<dbReference type="GlyGen" id="Q5U2P2">
    <property type="glycosylation" value="1 site"/>
</dbReference>
<dbReference type="iPTMnet" id="Q5U2P2"/>
<dbReference type="PhosphoSitePlus" id="Q5U2P2"/>
<dbReference type="PaxDb" id="10116-ENSRNOP00000059779"/>
<dbReference type="Ensembl" id="ENSRNOT00000066997.3">
    <property type="protein sequence ID" value="ENSRNOP00000059779.1"/>
    <property type="gene ID" value="ENSRNOG00000001525.8"/>
</dbReference>
<dbReference type="GeneID" id="303926"/>
<dbReference type="KEGG" id="rno:303926"/>
<dbReference type="UCSC" id="RGD:1308758">
    <property type="organism name" value="rat"/>
</dbReference>
<dbReference type="AGR" id="RGD:1308758"/>
<dbReference type="CTD" id="152404"/>
<dbReference type="RGD" id="1308758">
    <property type="gene designation" value="Igsf11"/>
</dbReference>
<dbReference type="eggNOG" id="ENOG502QV48">
    <property type="taxonomic scope" value="Eukaryota"/>
</dbReference>
<dbReference type="GeneTree" id="ENSGT00940000156392"/>
<dbReference type="HOGENOM" id="CLU_040549_3_0_1"/>
<dbReference type="InParanoid" id="Q5U2P2"/>
<dbReference type="OMA" id="CKGSSSW"/>
<dbReference type="OrthoDB" id="9932831at2759"/>
<dbReference type="PhylomeDB" id="Q5U2P2"/>
<dbReference type="TreeFam" id="TF330875"/>
<dbReference type="PRO" id="PR:Q5U2P2"/>
<dbReference type="Proteomes" id="UP000002494">
    <property type="component" value="Chromosome 11"/>
</dbReference>
<dbReference type="Bgee" id="ENSRNOG00000001525">
    <property type="expression patterns" value="Expressed in ovary and 16 other cell types or tissues"/>
</dbReference>
<dbReference type="GO" id="GO:0005911">
    <property type="term" value="C:cell-cell junction"/>
    <property type="evidence" value="ECO:0000266"/>
    <property type="project" value="RGD"/>
</dbReference>
<dbReference type="GO" id="GO:0060076">
    <property type="term" value="C:excitatory synapse"/>
    <property type="evidence" value="ECO:0000315"/>
    <property type="project" value="UniProtKB"/>
</dbReference>
<dbReference type="GO" id="GO:0098978">
    <property type="term" value="C:glutamatergic synapse"/>
    <property type="evidence" value="ECO:0000314"/>
    <property type="project" value="SynGO"/>
</dbReference>
<dbReference type="GO" id="GO:0014069">
    <property type="term" value="C:postsynaptic density"/>
    <property type="evidence" value="ECO:0000314"/>
    <property type="project" value="UniProtKB"/>
</dbReference>
<dbReference type="GO" id="GO:0098839">
    <property type="term" value="C:postsynaptic density membrane"/>
    <property type="evidence" value="ECO:0000314"/>
    <property type="project" value="SynGO"/>
</dbReference>
<dbReference type="GO" id="GO:0035255">
    <property type="term" value="F:ionotropic glutamate receptor binding"/>
    <property type="evidence" value="ECO:0000353"/>
    <property type="project" value="UniProtKB"/>
</dbReference>
<dbReference type="GO" id="GO:0098742">
    <property type="term" value="P:cell-cell adhesion via plasma-membrane adhesion molecules"/>
    <property type="evidence" value="ECO:0000318"/>
    <property type="project" value="GO_Central"/>
</dbReference>
<dbReference type="GO" id="GO:0007156">
    <property type="term" value="P:homophilic cell adhesion via plasma membrane adhesion molecules"/>
    <property type="evidence" value="ECO:0000250"/>
    <property type="project" value="UniProtKB"/>
</dbReference>
<dbReference type="GO" id="GO:0045185">
    <property type="term" value="P:maintenance of protein location"/>
    <property type="evidence" value="ECO:0000315"/>
    <property type="project" value="UniProtKB"/>
</dbReference>
<dbReference type="GO" id="GO:1900273">
    <property type="term" value="P:positive regulation of long-term synaptic potentiation"/>
    <property type="evidence" value="ECO:0000266"/>
    <property type="project" value="RGD"/>
</dbReference>
<dbReference type="GO" id="GO:0061885">
    <property type="term" value="P:positive regulation of mini excitatory postsynaptic potential"/>
    <property type="evidence" value="ECO:0000315"/>
    <property type="project" value="UniProtKB"/>
</dbReference>
<dbReference type="GO" id="GO:0099072">
    <property type="term" value="P:regulation of postsynaptic membrane neurotransmitter receptor levels"/>
    <property type="evidence" value="ECO:0000314"/>
    <property type="project" value="SynGO"/>
</dbReference>
<dbReference type="GO" id="GO:1905606">
    <property type="term" value="P:regulation of presynapse assembly"/>
    <property type="evidence" value="ECO:0000266"/>
    <property type="project" value="RGD"/>
</dbReference>
<dbReference type="GO" id="GO:0048167">
    <property type="term" value="P:regulation of synaptic plasticity"/>
    <property type="evidence" value="ECO:0000266"/>
    <property type="project" value="RGD"/>
</dbReference>
<dbReference type="GO" id="GO:0099537">
    <property type="term" value="P:trans-synaptic signaling"/>
    <property type="evidence" value="ECO:0000266"/>
    <property type="project" value="RGD"/>
</dbReference>
<dbReference type="FunFam" id="2.60.40.10:FF:000595">
    <property type="entry name" value="Immunoglobulin superfamily member 11"/>
    <property type="match status" value="1"/>
</dbReference>
<dbReference type="FunFam" id="2.60.40.10:FF:000095">
    <property type="entry name" value="immunoglobulin superfamily member 11 isoform X1"/>
    <property type="match status" value="1"/>
</dbReference>
<dbReference type="Gene3D" id="2.60.40.10">
    <property type="entry name" value="Immunoglobulins"/>
    <property type="match status" value="2"/>
</dbReference>
<dbReference type="InterPro" id="IPR007110">
    <property type="entry name" value="Ig-like_dom"/>
</dbReference>
<dbReference type="InterPro" id="IPR036179">
    <property type="entry name" value="Ig-like_dom_sf"/>
</dbReference>
<dbReference type="InterPro" id="IPR013783">
    <property type="entry name" value="Ig-like_fold"/>
</dbReference>
<dbReference type="InterPro" id="IPR003599">
    <property type="entry name" value="Ig_sub"/>
</dbReference>
<dbReference type="InterPro" id="IPR003598">
    <property type="entry name" value="Ig_sub2"/>
</dbReference>
<dbReference type="InterPro" id="IPR013106">
    <property type="entry name" value="Ig_V-set"/>
</dbReference>
<dbReference type="InterPro" id="IPR042758">
    <property type="entry name" value="IGSF11"/>
</dbReference>
<dbReference type="PANTHER" id="PTHR44699">
    <property type="entry name" value="IMMUNOGLOBULIN SUPERFAMILY MEMBER 11"/>
    <property type="match status" value="1"/>
</dbReference>
<dbReference type="PANTHER" id="PTHR44699:SF1">
    <property type="entry name" value="IMMUNOGLOBULIN SUPERFAMILY MEMBER 11"/>
    <property type="match status" value="1"/>
</dbReference>
<dbReference type="Pfam" id="PF13927">
    <property type="entry name" value="Ig_3"/>
    <property type="match status" value="1"/>
</dbReference>
<dbReference type="Pfam" id="PF07686">
    <property type="entry name" value="V-set"/>
    <property type="match status" value="1"/>
</dbReference>
<dbReference type="SMART" id="SM00409">
    <property type="entry name" value="IG"/>
    <property type="match status" value="2"/>
</dbReference>
<dbReference type="SMART" id="SM00408">
    <property type="entry name" value="IGc2"/>
    <property type="match status" value="1"/>
</dbReference>
<dbReference type="SUPFAM" id="SSF48726">
    <property type="entry name" value="Immunoglobulin"/>
    <property type="match status" value="2"/>
</dbReference>
<dbReference type="PROSITE" id="PS50835">
    <property type="entry name" value="IG_LIKE"/>
    <property type="match status" value="2"/>
</dbReference>
<reference key="1">
    <citation type="journal article" date="2004" name="Genome Res.">
        <title>The status, quality, and expansion of the NIH full-length cDNA project: the Mammalian Gene Collection (MGC).</title>
        <authorList>
            <consortium name="The MGC Project Team"/>
        </authorList>
    </citation>
    <scope>NUCLEOTIDE SEQUENCE [LARGE SCALE MRNA]</scope>
    <source>
        <tissue>Kidney</tissue>
    </source>
</reference>
<gene>
    <name type="primary">Igsf11</name>
</gene>
<keyword id="KW-0130">Cell adhesion</keyword>
<keyword id="KW-1003">Cell membrane</keyword>
<keyword id="KW-1015">Disulfide bond</keyword>
<keyword id="KW-0325">Glycoprotein</keyword>
<keyword id="KW-0341">Growth regulation</keyword>
<keyword id="KW-0393">Immunoglobulin domain</keyword>
<keyword id="KW-0472">Membrane</keyword>
<keyword id="KW-0488">Methylation</keyword>
<keyword id="KW-0675">Receptor</keyword>
<keyword id="KW-1185">Reference proteome</keyword>
<keyword id="KW-0677">Repeat</keyword>
<keyword id="KW-0732">Signal</keyword>
<keyword id="KW-0812">Transmembrane</keyword>
<keyword id="KW-1133">Transmembrane helix</keyword>
<accession>Q5U2P2</accession>
<name>IGS11_RAT</name>
<organism>
    <name type="scientific">Rattus norvegicus</name>
    <name type="common">Rat</name>
    <dbReference type="NCBI Taxonomy" id="10116"/>
    <lineage>
        <taxon>Eukaryota</taxon>
        <taxon>Metazoa</taxon>
        <taxon>Chordata</taxon>
        <taxon>Craniata</taxon>
        <taxon>Vertebrata</taxon>
        <taxon>Euteleostomi</taxon>
        <taxon>Mammalia</taxon>
        <taxon>Eutheria</taxon>
        <taxon>Euarchontoglires</taxon>
        <taxon>Glires</taxon>
        <taxon>Rodentia</taxon>
        <taxon>Myomorpha</taxon>
        <taxon>Muroidea</taxon>
        <taxon>Muridae</taxon>
        <taxon>Murinae</taxon>
        <taxon>Rattus</taxon>
    </lineage>
</organism>
<proteinExistence type="evidence at transcript level"/>